<sequence length="260" mass="27371">MVTFYGKTFASRLLIGSALYPSPAIMQGAIRAAGSNIVTVSLRRESAGGKTGDAFWNLIRELDVAVLPNTAGCRSVREAVTTAKLARELFGTSWIKLEVIADNDTLQPDVVGLVEAAAILIKDGFEVFPYCTEDLSVASRLVDAGCKVVMPWAAPIGSARGITNRDALKLLRDRLPDITLVVDAGIGAPSHAAQALELGYDAVLLNTAIAKAADPVAMANAFRLGVEAGRTAFEAGLMNARDFASPSTPVVGTPFWHAVS</sequence>
<dbReference type="EC" id="2.8.1.10" evidence="1"/>
<dbReference type="EMBL" id="BA000040">
    <property type="protein sequence ID" value="BAC51922.1"/>
    <property type="molecule type" value="Genomic_DNA"/>
</dbReference>
<dbReference type="RefSeq" id="NP_773297.1">
    <property type="nucleotide sequence ID" value="NC_004463.1"/>
</dbReference>
<dbReference type="RefSeq" id="WP_011089397.1">
    <property type="nucleotide sequence ID" value="NC_004463.1"/>
</dbReference>
<dbReference type="SMR" id="Q89FP2"/>
<dbReference type="FunCoup" id="Q89FP2">
    <property type="interactions" value="438"/>
</dbReference>
<dbReference type="STRING" id="224911.AAV28_30860"/>
<dbReference type="EnsemblBacteria" id="BAC51922">
    <property type="protein sequence ID" value="BAC51922"/>
    <property type="gene ID" value="BAC51922"/>
</dbReference>
<dbReference type="GeneID" id="46493629"/>
<dbReference type="KEGG" id="bja:blr6657"/>
<dbReference type="PATRIC" id="fig|224911.44.peg.6669"/>
<dbReference type="eggNOG" id="COG2022">
    <property type="taxonomic scope" value="Bacteria"/>
</dbReference>
<dbReference type="HOGENOM" id="CLU_062233_1_0_5"/>
<dbReference type="InParanoid" id="Q89FP2"/>
<dbReference type="OrthoDB" id="9805935at2"/>
<dbReference type="PhylomeDB" id="Q89FP2"/>
<dbReference type="UniPathway" id="UPA00060"/>
<dbReference type="Proteomes" id="UP000002526">
    <property type="component" value="Chromosome"/>
</dbReference>
<dbReference type="GO" id="GO:1902508">
    <property type="term" value="C:2-iminoacetate synthase complex"/>
    <property type="evidence" value="ECO:0000318"/>
    <property type="project" value="GO_Central"/>
</dbReference>
<dbReference type="GO" id="GO:0005737">
    <property type="term" value="C:cytoplasm"/>
    <property type="evidence" value="ECO:0007669"/>
    <property type="project" value="UniProtKB-SubCell"/>
</dbReference>
<dbReference type="GO" id="GO:1990107">
    <property type="term" value="F:thiazole synthase activity"/>
    <property type="evidence" value="ECO:0007669"/>
    <property type="project" value="UniProtKB-EC"/>
</dbReference>
<dbReference type="GO" id="GO:0009228">
    <property type="term" value="P:thiamine biosynthetic process"/>
    <property type="evidence" value="ECO:0000318"/>
    <property type="project" value="GO_Central"/>
</dbReference>
<dbReference type="GO" id="GO:0009229">
    <property type="term" value="P:thiamine diphosphate biosynthetic process"/>
    <property type="evidence" value="ECO:0000318"/>
    <property type="project" value="GO_Central"/>
</dbReference>
<dbReference type="CDD" id="cd04728">
    <property type="entry name" value="ThiG"/>
    <property type="match status" value="1"/>
</dbReference>
<dbReference type="Gene3D" id="3.20.20.70">
    <property type="entry name" value="Aldolase class I"/>
    <property type="match status" value="1"/>
</dbReference>
<dbReference type="HAMAP" id="MF_00443">
    <property type="entry name" value="ThiG"/>
    <property type="match status" value="1"/>
</dbReference>
<dbReference type="InterPro" id="IPR013785">
    <property type="entry name" value="Aldolase_TIM"/>
</dbReference>
<dbReference type="InterPro" id="IPR033983">
    <property type="entry name" value="Thiazole_synthase_ThiG"/>
</dbReference>
<dbReference type="InterPro" id="IPR008867">
    <property type="entry name" value="ThiG"/>
</dbReference>
<dbReference type="PANTHER" id="PTHR34266">
    <property type="entry name" value="THIAZOLE SYNTHASE"/>
    <property type="match status" value="1"/>
</dbReference>
<dbReference type="PANTHER" id="PTHR34266:SF2">
    <property type="entry name" value="THIAZOLE SYNTHASE"/>
    <property type="match status" value="1"/>
</dbReference>
<dbReference type="Pfam" id="PF05690">
    <property type="entry name" value="ThiG"/>
    <property type="match status" value="1"/>
</dbReference>
<dbReference type="SUPFAM" id="SSF110399">
    <property type="entry name" value="ThiG-like"/>
    <property type="match status" value="1"/>
</dbReference>
<proteinExistence type="inferred from homology"/>
<protein>
    <recommendedName>
        <fullName evidence="1">Thiazole synthase</fullName>
        <ecNumber evidence="1">2.8.1.10</ecNumber>
    </recommendedName>
</protein>
<organism>
    <name type="scientific">Bradyrhizobium diazoefficiens (strain JCM 10833 / BCRC 13528 / IAM 13628 / NBRC 14792 / USDA 110)</name>
    <dbReference type="NCBI Taxonomy" id="224911"/>
    <lineage>
        <taxon>Bacteria</taxon>
        <taxon>Pseudomonadati</taxon>
        <taxon>Pseudomonadota</taxon>
        <taxon>Alphaproteobacteria</taxon>
        <taxon>Hyphomicrobiales</taxon>
        <taxon>Nitrobacteraceae</taxon>
        <taxon>Bradyrhizobium</taxon>
    </lineage>
</organism>
<accession>Q89FP2</accession>
<comment type="function">
    <text evidence="1">Catalyzes the rearrangement of 1-deoxy-D-xylulose 5-phosphate (DXP) to produce the thiazole phosphate moiety of thiamine. Sulfur is provided by the thiocarboxylate moiety of the carrier protein ThiS. In vitro, sulfur can be provided by H(2)S.</text>
</comment>
<comment type="catalytic activity">
    <reaction evidence="1">
        <text>[ThiS sulfur-carrier protein]-C-terminal-Gly-aminoethanethioate + 2-iminoacetate + 1-deoxy-D-xylulose 5-phosphate = [ThiS sulfur-carrier protein]-C-terminal Gly-Gly + 2-[(2R,5Z)-2-carboxy-4-methylthiazol-5(2H)-ylidene]ethyl phosphate + 2 H2O + H(+)</text>
        <dbReference type="Rhea" id="RHEA:26297"/>
        <dbReference type="Rhea" id="RHEA-COMP:12909"/>
        <dbReference type="Rhea" id="RHEA-COMP:19908"/>
        <dbReference type="ChEBI" id="CHEBI:15377"/>
        <dbReference type="ChEBI" id="CHEBI:15378"/>
        <dbReference type="ChEBI" id="CHEBI:57792"/>
        <dbReference type="ChEBI" id="CHEBI:62899"/>
        <dbReference type="ChEBI" id="CHEBI:77846"/>
        <dbReference type="ChEBI" id="CHEBI:90778"/>
        <dbReference type="ChEBI" id="CHEBI:232372"/>
        <dbReference type="EC" id="2.8.1.10"/>
    </reaction>
</comment>
<comment type="pathway">
    <text evidence="1">Cofactor biosynthesis; thiamine diphosphate biosynthesis.</text>
</comment>
<comment type="subunit">
    <text evidence="1">Homotetramer. Forms heterodimers with either ThiH or ThiS.</text>
</comment>
<comment type="subcellular location">
    <subcellularLocation>
        <location evidence="1">Cytoplasm</location>
    </subcellularLocation>
</comment>
<comment type="similarity">
    <text evidence="1">Belongs to the ThiG family.</text>
</comment>
<evidence type="ECO:0000255" key="1">
    <source>
        <dbReference type="HAMAP-Rule" id="MF_00443"/>
    </source>
</evidence>
<name>THIG_BRADU</name>
<keyword id="KW-0963">Cytoplasm</keyword>
<keyword id="KW-1185">Reference proteome</keyword>
<keyword id="KW-0704">Schiff base</keyword>
<keyword id="KW-0784">Thiamine biosynthesis</keyword>
<keyword id="KW-0808">Transferase</keyword>
<gene>
    <name evidence="1" type="primary">thiG</name>
    <name type="ordered locus">blr6657</name>
</gene>
<feature type="chain" id="PRO_0000162795" description="Thiazole synthase">
    <location>
        <begin position="1"/>
        <end position="260"/>
    </location>
</feature>
<feature type="active site" description="Schiff-base intermediate with DXP" evidence="1">
    <location>
        <position position="96"/>
    </location>
</feature>
<feature type="binding site" evidence="1">
    <location>
        <position position="157"/>
    </location>
    <ligand>
        <name>1-deoxy-D-xylulose 5-phosphate</name>
        <dbReference type="ChEBI" id="CHEBI:57792"/>
    </ligand>
</feature>
<feature type="binding site" evidence="1">
    <location>
        <begin position="184"/>
        <end position="185"/>
    </location>
    <ligand>
        <name>1-deoxy-D-xylulose 5-phosphate</name>
        <dbReference type="ChEBI" id="CHEBI:57792"/>
    </ligand>
</feature>
<feature type="binding site" evidence="1">
    <location>
        <begin position="206"/>
        <end position="207"/>
    </location>
    <ligand>
        <name>1-deoxy-D-xylulose 5-phosphate</name>
        <dbReference type="ChEBI" id="CHEBI:57792"/>
    </ligand>
</feature>
<reference key="1">
    <citation type="journal article" date="2002" name="DNA Res.">
        <title>Complete genomic sequence of nitrogen-fixing symbiotic bacterium Bradyrhizobium japonicum USDA110.</title>
        <authorList>
            <person name="Kaneko T."/>
            <person name="Nakamura Y."/>
            <person name="Sato S."/>
            <person name="Minamisawa K."/>
            <person name="Uchiumi T."/>
            <person name="Sasamoto S."/>
            <person name="Watanabe A."/>
            <person name="Idesawa K."/>
            <person name="Iriguchi M."/>
            <person name="Kawashima K."/>
            <person name="Kohara M."/>
            <person name="Matsumoto M."/>
            <person name="Shimpo S."/>
            <person name="Tsuruoka H."/>
            <person name="Wada T."/>
            <person name="Yamada M."/>
            <person name="Tabata S."/>
        </authorList>
    </citation>
    <scope>NUCLEOTIDE SEQUENCE [LARGE SCALE GENOMIC DNA]</scope>
    <source>
        <strain>JCM 10833 / BCRC 13528 / IAM 13628 / NBRC 14792 / USDA 110</strain>
    </source>
</reference>